<dbReference type="EMBL" id="AF458066">
    <property type="protein sequence ID" value="AAM77570.1"/>
    <property type="molecule type" value="mRNA"/>
</dbReference>
<dbReference type="EMBL" id="CS251263">
    <property type="status" value="NOT_ANNOTATED_CDS"/>
    <property type="molecule type" value="Unassigned_DNA"/>
</dbReference>
<dbReference type="EMBL" id="CS251267">
    <property type="status" value="NOT_ANNOTATED_CDS"/>
    <property type="molecule type" value="Unassigned_DNA"/>
</dbReference>
<dbReference type="EMBL" id="AX360307">
    <property type="protein sequence ID" value="CAD23359.1"/>
    <property type="molecule type" value="Unassigned_DNA"/>
</dbReference>
<dbReference type="EMBL" id="AX360310">
    <property type="protein sequence ID" value="CAD23360.1"/>
    <property type="molecule type" value="Unassigned_DNA"/>
</dbReference>
<dbReference type="EMBL" id="AC153910">
    <property type="status" value="NOT_ANNOTATED_CDS"/>
    <property type="molecule type" value="Genomic_DNA"/>
</dbReference>
<dbReference type="EMBL" id="CH466523">
    <property type="protein sequence ID" value="EDK99478.1"/>
    <property type="molecule type" value="Genomic_DNA"/>
</dbReference>
<dbReference type="EMBL" id="BC004759">
    <property type="protein sequence ID" value="AAH04759.1"/>
    <property type="molecule type" value="mRNA"/>
</dbReference>
<dbReference type="CCDS" id="CCDS20422.1">
    <molecule id="Q8K4C2-1"/>
</dbReference>
<dbReference type="RefSeq" id="NP_598920.3">
    <molecule id="Q8K4C2-1"/>
    <property type="nucleotide sequence ID" value="NM_134159.4"/>
</dbReference>
<dbReference type="RefSeq" id="NP_849273.1">
    <molecule id="Q8K4C2-3"/>
    <property type="nucleotide sequence ID" value="NM_178942.1"/>
</dbReference>
<dbReference type="RefSeq" id="XP_006505728.1">
    <molecule id="Q8K4C2-5"/>
    <property type="nucleotide sequence ID" value="XM_006505665.1"/>
</dbReference>
<dbReference type="RefSeq" id="XP_006505729.1">
    <molecule id="Q8K4C2-4"/>
    <property type="nucleotide sequence ID" value="XM_006505666.1"/>
</dbReference>
<dbReference type="SMR" id="Q8K4C2"/>
<dbReference type="BioGRID" id="228481">
    <property type="interactions" value="2"/>
</dbReference>
<dbReference type="FunCoup" id="Q8K4C2">
    <property type="interactions" value="702"/>
</dbReference>
<dbReference type="IntAct" id="Q8K4C2">
    <property type="interactions" value="2"/>
</dbReference>
<dbReference type="STRING" id="10090.ENSMUSP00000055343"/>
<dbReference type="GlyCosmos" id="Q8K4C2">
    <property type="glycosylation" value="5 sites, No reported glycans"/>
</dbReference>
<dbReference type="GlyGen" id="Q8K4C2">
    <property type="glycosylation" value="5 sites"/>
</dbReference>
<dbReference type="PhosphoSitePlus" id="Q8K4C2"/>
<dbReference type="PaxDb" id="10090-ENSMUSP00000055343"/>
<dbReference type="ProteomicsDB" id="273072">
    <molecule id="Q8K4C2-3"/>
</dbReference>
<dbReference type="ProteomicsDB" id="273073">
    <molecule id="Q8K4C2-4"/>
</dbReference>
<dbReference type="ProteomicsDB" id="273074">
    <molecule id="Q8K4C2-1"/>
</dbReference>
<dbReference type="ProteomicsDB" id="273075">
    <molecule id="Q8K4C2-5"/>
</dbReference>
<dbReference type="ProteomicsDB" id="273076">
    <molecule id="Q8K4C2-2"/>
</dbReference>
<dbReference type="Antibodypedia" id="10412">
    <property type="antibodies" value="338 antibodies from 34 providers"/>
</dbReference>
<dbReference type="DNASU" id="171095"/>
<dbReference type="Ensembl" id="ENSMUST00000058300.14">
    <molecule id="Q8K4C2-1"/>
    <property type="protein sequence ID" value="ENSMUSP00000055343.8"/>
    <property type="gene ID" value="ENSMUSG00000030281.17"/>
</dbReference>
<dbReference type="GeneID" id="171095"/>
<dbReference type="KEGG" id="mmu:171095"/>
<dbReference type="UCSC" id="uc009dgl.3">
    <molecule id="Q8K4C2-3"/>
    <property type="organism name" value="mouse"/>
</dbReference>
<dbReference type="AGR" id="MGI:2159336"/>
<dbReference type="CTD" id="84818"/>
<dbReference type="MGI" id="MGI:2159336">
    <property type="gene designation" value="Il17rc"/>
</dbReference>
<dbReference type="VEuPathDB" id="HostDB:ENSMUSG00000030281"/>
<dbReference type="eggNOG" id="ENOG502QWQ3">
    <property type="taxonomic scope" value="Eukaryota"/>
</dbReference>
<dbReference type="GeneTree" id="ENSGT00730000111286"/>
<dbReference type="HOGENOM" id="CLU_026893_1_0_1"/>
<dbReference type="InParanoid" id="Q8K4C2"/>
<dbReference type="OMA" id="RTEEWMH"/>
<dbReference type="OrthoDB" id="68473at9989"/>
<dbReference type="TreeFam" id="TF335852"/>
<dbReference type="BioGRID-ORCS" id="171095">
    <property type="hits" value="1 hit in 77 CRISPR screens"/>
</dbReference>
<dbReference type="PRO" id="PR:Q8K4C2"/>
<dbReference type="Proteomes" id="UP000000589">
    <property type="component" value="Chromosome 6"/>
</dbReference>
<dbReference type="RNAct" id="Q8K4C2">
    <property type="molecule type" value="protein"/>
</dbReference>
<dbReference type="Bgee" id="ENSMUSG00000030281">
    <property type="expression patterns" value="Expressed in ileum and 81 other cell types or tissues"/>
</dbReference>
<dbReference type="ExpressionAtlas" id="Q8K4C2">
    <property type="expression patterns" value="baseline and differential"/>
</dbReference>
<dbReference type="GO" id="GO:0009986">
    <property type="term" value="C:cell surface"/>
    <property type="evidence" value="ECO:0000314"/>
    <property type="project" value="UniProtKB"/>
</dbReference>
<dbReference type="GO" id="GO:0005886">
    <property type="term" value="C:plasma membrane"/>
    <property type="evidence" value="ECO:0000314"/>
    <property type="project" value="MGI"/>
</dbReference>
<dbReference type="GO" id="GO:0015026">
    <property type="term" value="F:coreceptor activity"/>
    <property type="evidence" value="ECO:0007669"/>
    <property type="project" value="Ensembl"/>
</dbReference>
<dbReference type="GO" id="GO:0030368">
    <property type="term" value="F:interleukin-17 receptor activity"/>
    <property type="evidence" value="ECO:0000266"/>
    <property type="project" value="MGI"/>
</dbReference>
<dbReference type="GO" id="GO:0005102">
    <property type="term" value="F:signaling receptor binding"/>
    <property type="evidence" value="ECO:0000353"/>
    <property type="project" value="UniProtKB"/>
</dbReference>
<dbReference type="GO" id="GO:0050832">
    <property type="term" value="P:defense response to fungus"/>
    <property type="evidence" value="ECO:0000315"/>
    <property type="project" value="UniProtKB"/>
</dbReference>
<dbReference type="GO" id="GO:0071621">
    <property type="term" value="P:granulocyte chemotaxis"/>
    <property type="evidence" value="ECO:0000315"/>
    <property type="project" value="UniProtKB"/>
</dbReference>
<dbReference type="GO" id="GO:0006954">
    <property type="term" value="P:inflammatory response"/>
    <property type="evidence" value="ECO:0007669"/>
    <property type="project" value="UniProtKB-KW"/>
</dbReference>
<dbReference type="GO" id="GO:0038173">
    <property type="term" value="P:interleukin-17A-mediated signaling pathway"/>
    <property type="evidence" value="ECO:0007669"/>
    <property type="project" value="Ensembl"/>
</dbReference>
<dbReference type="GO" id="GO:1900017">
    <property type="term" value="P:positive regulation of cytokine production involved in inflammatory response"/>
    <property type="evidence" value="ECO:0000316"/>
    <property type="project" value="MGI"/>
</dbReference>
<dbReference type="GO" id="GO:0032755">
    <property type="term" value="P:positive regulation of interleukin-6 production"/>
    <property type="evidence" value="ECO:0000315"/>
    <property type="project" value="UniProtKB"/>
</dbReference>
<dbReference type="FunFam" id="3.40.50.11530:FF:000001">
    <property type="entry name" value="interleukin-17 receptor C isoform X1"/>
    <property type="match status" value="1"/>
</dbReference>
<dbReference type="Gene3D" id="3.40.50.11530">
    <property type="match status" value="1"/>
</dbReference>
<dbReference type="InterPro" id="IPR039465">
    <property type="entry name" value="IL-17_rcpt-like"/>
</dbReference>
<dbReference type="InterPro" id="IPR027841">
    <property type="entry name" value="IL-17_rcpt_C/E_N"/>
</dbReference>
<dbReference type="InterPro" id="IPR013568">
    <property type="entry name" value="SEFIR_dom"/>
</dbReference>
<dbReference type="PANTHER" id="PTHR15583">
    <property type="entry name" value="INTERLEUKIN-17 RECEPTOR"/>
    <property type="match status" value="1"/>
</dbReference>
<dbReference type="PANTHER" id="PTHR15583:SF12">
    <property type="entry name" value="INTERLEUKIN-17 RECEPTOR C"/>
    <property type="match status" value="1"/>
</dbReference>
<dbReference type="Pfam" id="PF15037">
    <property type="entry name" value="IL17_R_N"/>
    <property type="match status" value="1"/>
</dbReference>
<dbReference type="Pfam" id="PF08357">
    <property type="entry name" value="SEFIR"/>
    <property type="match status" value="1"/>
</dbReference>
<dbReference type="PROSITE" id="PS51534">
    <property type="entry name" value="SEFIR"/>
    <property type="match status" value="1"/>
</dbReference>
<evidence type="ECO:0000250" key="1">
    <source>
        <dbReference type="UniProtKB" id="Q8NAC3"/>
    </source>
</evidence>
<evidence type="ECO:0000255" key="2"/>
<evidence type="ECO:0000255" key="3">
    <source>
        <dbReference type="PROSITE-ProRule" id="PRU00867"/>
    </source>
</evidence>
<evidence type="ECO:0000269" key="4">
    <source>
    </source>
</evidence>
<evidence type="ECO:0000269" key="5">
    <source>
    </source>
</evidence>
<evidence type="ECO:0000269" key="6">
    <source>
    </source>
</evidence>
<evidence type="ECO:0000269" key="7">
    <source>
    </source>
</evidence>
<evidence type="ECO:0000269" key="8">
    <source>
    </source>
</evidence>
<evidence type="ECO:0000269" key="9">
    <source>
    </source>
</evidence>
<evidence type="ECO:0000269" key="10">
    <source>
    </source>
</evidence>
<evidence type="ECO:0000303" key="11">
    <source>
    </source>
</evidence>
<evidence type="ECO:0000303" key="12">
    <source>
    </source>
</evidence>
<evidence type="ECO:0000305" key="13"/>
<proteinExistence type="evidence at protein level"/>
<name>I17RC_MOUSE</name>
<reference key="1">
    <citation type="submission" date="2001-12" db="EMBL/GenBank/DDBJ databases">
        <title>Identification of novel IL-17 related receptors.</title>
        <authorList>
            <person name="Gilbert J.M."/>
            <person name="Gorman D.M."/>
        </authorList>
    </citation>
    <scope>NUCLEOTIDE SEQUENCE [MRNA] (ISOFORM 3)</scope>
</reference>
<reference key="2">
    <citation type="patent" date="2002-01-17" number="WO0204519">
        <authorList>
            <person name="Gao Z."/>
        </authorList>
    </citation>
    <scope>NUCLEOTIDE SEQUENCE [MRNA] (ISOFORMS 1 AND 3)</scope>
</reference>
<reference key="3">
    <citation type="patent" date="2005-12-29" number="WO2005123778">
        <authorList>
            <person name="Presnell S.R."/>
            <person name="Burkhead S.K."/>
            <person name="Levin S.D."/>
            <person name="Kuestner R.E."/>
            <person name="Gao Z."/>
            <person name="Jaspers S.R."/>
            <person name="Billsborough J."/>
        </authorList>
    </citation>
    <scope>NUCLEOTIDE SEQUENCE [MRNA] (ISOFORMS 2 AND 4)</scope>
</reference>
<reference key="4">
    <citation type="journal article" date="2009" name="PLoS Biol.">
        <title>Lineage-specific biology revealed by a finished genome assembly of the mouse.</title>
        <authorList>
            <person name="Church D.M."/>
            <person name="Goodstadt L."/>
            <person name="Hillier L.W."/>
            <person name="Zody M.C."/>
            <person name="Goldstein S."/>
            <person name="She X."/>
            <person name="Bult C.J."/>
            <person name="Agarwala R."/>
            <person name="Cherry J.L."/>
            <person name="DiCuccio M."/>
            <person name="Hlavina W."/>
            <person name="Kapustin Y."/>
            <person name="Meric P."/>
            <person name="Maglott D."/>
            <person name="Birtle Z."/>
            <person name="Marques A.C."/>
            <person name="Graves T."/>
            <person name="Zhou S."/>
            <person name="Teague B."/>
            <person name="Potamousis K."/>
            <person name="Churas C."/>
            <person name="Place M."/>
            <person name="Herschleb J."/>
            <person name="Runnheim R."/>
            <person name="Forrest D."/>
            <person name="Amos-Landgraf J."/>
            <person name="Schwartz D.C."/>
            <person name="Cheng Z."/>
            <person name="Lindblad-Toh K."/>
            <person name="Eichler E.E."/>
            <person name="Ponting C.P."/>
        </authorList>
    </citation>
    <scope>NUCLEOTIDE SEQUENCE [LARGE SCALE GENOMIC DNA]</scope>
    <source>
        <strain>C57BL/6J</strain>
    </source>
</reference>
<reference key="5">
    <citation type="submission" date="2005-07" db="EMBL/GenBank/DDBJ databases">
        <authorList>
            <person name="Mural R.J."/>
            <person name="Adams M.D."/>
            <person name="Myers E.W."/>
            <person name="Smith H.O."/>
            <person name="Venter J.C."/>
        </authorList>
    </citation>
    <scope>NUCLEOTIDE SEQUENCE [LARGE SCALE GENOMIC DNA]</scope>
</reference>
<reference key="6">
    <citation type="journal article" date="2004" name="Genome Res.">
        <title>The status, quality, and expansion of the NIH full-length cDNA project: the Mammalian Gene Collection (MGC).</title>
        <authorList>
            <consortium name="The MGC Project Team"/>
        </authorList>
    </citation>
    <scope>NUCLEOTIDE SEQUENCE [LARGE SCALE MRNA] (ISOFORM 5)</scope>
    <source>
        <strain>129</strain>
        <tissue>Mammary tumor</tissue>
    </source>
</reference>
<reference key="7">
    <citation type="journal article" date="2007" name="J. Immunol.">
        <title>Identification of the IL-17 receptor related molecule IL-17RC as the receptor for IL-17F.</title>
        <authorList>
            <person name="Kuestner R.E."/>
            <person name="Taft D.W."/>
            <person name="Haran A."/>
            <person name="Brandt C.S."/>
            <person name="Brender T."/>
            <person name="Lum K."/>
            <person name="Harder B."/>
            <person name="Okada S."/>
            <person name="Ostrander C.D."/>
            <person name="Kreindler J.L."/>
            <person name="Aujla S.J."/>
            <person name="Reardon B."/>
            <person name="Moore M."/>
            <person name="Shea P."/>
            <person name="Schreckhise R."/>
            <person name="Bukowski T.R."/>
            <person name="Presnell S."/>
            <person name="Guerra-Lewis P."/>
            <person name="Parrish-Novak J."/>
            <person name="Ellsworth J.L."/>
            <person name="Jaspers S."/>
            <person name="Lewis K.E."/>
            <person name="Appleby M."/>
            <person name="Kolls J.K."/>
            <person name="Rixon M."/>
            <person name="West J.W."/>
            <person name="Gao Z."/>
            <person name="Levin S.D."/>
        </authorList>
    </citation>
    <scope>FUNCTION</scope>
    <scope>SUBCELLULAR LOCATION</scope>
    <scope>ALTERNATIVE SPLICING (ISOFORMS 1; 2; 3 AND 4)</scope>
</reference>
<reference key="8">
    <citation type="journal article" date="2009" name="Immunity">
        <title>Differential roles of interleukin-17A and -17F in host defense against mucoepithelial bacterial infection and allergic responses.</title>
        <authorList>
            <person name="Ishigame H."/>
            <person name="Kakuta S."/>
            <person name="Nagai T."/>
            <person name="Kadoki M."/>
            <person name="Nambu A."/>
            <person name="Komiyama Y."/>
            <person name="Fujikado N."/>
            <person name="Tanahashi Y."/>
            <person name="Akitsu A."/>
            <person name="Kotaki H."/>
            <person name="Sudo K."/>
            <person name="Nakae S."/>
            <person name="Sasakawa C."/>
            <person name="Iwakura Y."/>
        </authorList>
    </citation>
    <scope>FUNCTION</scope>
    <scope>TISSUE SPECIFICITY</scope>
</reference>
<reference key="9">
    <citation type="journal article" date="2010" name="J. Immunol.">
        <title>IL-17RC is required for immune signaling via an extended SEF/IL-17R signaling domain in the cytoplasmic tail.</title>
        <authorList>
            <person name="Ho A.W."/>
            <person name="Shen F."/>
            <person name="Conti H.R."/>
            <person name="Patel N."/>
            <person name="Childs E.E."/>
            <person name="Peterson A.C."/>
            <person name="Hernandez-Santos N."/>
            <person name="Kolls J.K."/>
            <person name="Kane L.P."/>
            <person name="Ouyang W."/>
            <person name="Gaffen S.L."/>
        </authorList>
    </citation>
    <scope>FUNCTION</scope>
    <scope>SUBUNIT</scope>
    <scope>INTERACTION WITH TRAF3IP2</scope>
</reference>
<reference key="10">
    <citation type="journal article" date="2016" name="Cell Host Microbe">
        <title>IL-17 Receptor Signaling in the Lung Epithelium Is Required for Mucosal Chemokine Gradients and Pulmonary Host Defense against K. pneumoniae.</title>
        <authorList>
            <person name="Chen K."/>
            <person name="Eddens T."/>
            <person name="Trevejo-Nunez G."/>
            <person name="Way E.E."/>
            <person name="Elsegeiny W."/>
            <person name="Ricks D.M."/>
            <person name="Garg A.V."/>
            <person name="Erb C.J."/>
            <person name="Bo M."/>
            <person name="Wang T."/>
            <person name="Chen W."/>
            <person name="Lee J.S."/>
            <person name="Gaffen S.L."/>
            <person name="Kolls J.K."/>
        </authorList>
    </citation>
    <scope>FUNCTION</scope>
</reference>
<reference key="11">
    <citation type="journal article" date="2016" name="PLoS Pathog.">
        <title>IL-17A Promotes Pulmonary B-1a Cell Differentiation via Induction of Blimp-1 Expression during Influenza Virus Infection.</title>
        <authorList>
            <person name="Wang X."/>
            <person name="Ma K."/>
            <person name="Chen M."/>
            <person name="Ko K.H."/>
            <person name="Zheng B.J."/>
            <person name="Lu L."/>
        </authorList>
    </citation>
    <scope>TISSUE SPECIFICITY</scope>
</reference>
<reference key="12">
    <citation type="journal article" date="2017" name="Cell Rep.">
        <title>The IL-17F/IL-17RC Axis Promotes Respiratory Allergy in the Proximal Airways.</title>
        <authorList>
            <person name="De Luca A."/>
            <person name="Pariano M."/>
            <person name="Cellini B."/>
            <person name="Costantini C."/>
            <person name="Villella V.R."/>
            <person name="Jose S.S."/>
            <person name="Palmieri M."/>
            <person name="Borghi M."/>
            <person name="Galosi C."/>
            <person name="Paolicelli G."/>
            <person name="Maiuri L."/>
            <person name="Fric J."/>
            <person name="Zelante T."/>
        </authorList>
    </citation>
    <scope>FUNCTION</scope>
    <scope>TISSUE SPECIFICITY</scope>
    <scope>INDUCTION</scope>
</reference>
<reference key="13">
    <citation type="journal article" date="2020" name="Nature">
        <title>gammadelta T cells and adipocyte IL-17RC control fat innervation and thermogenesis.</title>
        <authorList>
            <person name="Hu B."/>
            <person name="Jin C."/>
            <person name="Zeng X."/>
            <person name="Resch J.M."/>
            <person name="Jedrychowski M.P."/>
            <person name="Yang Z."/>
            <person name="Desai B.N."/>
            <person name="Banks A.S."/>
            <person name="Lowell B.B."/>
            <person name="Mathis D."/>
            <person name="Spiegelman B.M."/>
        </authorList>
    </citation>
    <scope>FUNCTION</scope>
</reference>
<protein>
    <recommendedName>
        <fullName>Interleukin-17 receptor C</fullName>
        <shortName>IL-17 receptor C</shortName>
        <shortName>IL-17RC</shortName>
    </recommendedName>
    <alternativeName>
        <fullName>Interleukin-17 receptor-like protein</fullName>
        <shortName>IL-17RL</shortName>
    </alternativeName>
    <alternativeName>
        <fullName>ZcytoR14</fullName>
    </alternativeName>
</protein>
<organism>
    <name type="scientific">Mus musculus</name>
    <name type="common">Mouse</name>
    <dbReference type="NCBI Taxonomy" id="10090"/>
    <lineage>
        <taxon>Eukaryota</taxon>
        <taxon>Metazoa</taxon>
        <taxon>Chordata</taxon>
        <taxon>Craniata</taxon>
        <taxon>Vertebrata</taxon>
        <taxon>Euteleostomi</taxon>
        <taxon>Mammalia</taxon>
        <taxon>Eutheria</taxon>
        <taxon>Euarchontoglires</taxon>
        <taxon>Glires</taxon>
        <taxon>Rodentia</taxon>
        <taxon>Myomorpha</taxon>
        <taxon>Muroidea</taxon>
        <taxon>Muridae</taxon>
        <taxon>Murinae</taxon>
        <taxon>Mus</taxon>
        <taxon>Mus</taxon>
    </lineage>
</organism>
<accession>Q8K4C2</accession>
<accession>G3X9C0</accession>
<accession>Q99J43</accession>
<feature type="signal peptide" evidence="2">
    <location>
        <begin position="1"/>
        <end position="21"/>
    </location>
</feature>
<feature type="chain" id="PRO_0000011035" description="Interleukin-17 receptor C">
    <location>
        <begin position="22"/>
        <end position="698"/>
    </location>
</feature>
<feature type="topological domain" description="Extracellular" evidence="2">
    <location>
        <begin position="22"/>
        <end position="464"/>
    </location>
</feature>
<feature type="transmembrane region" description="Helical" evidence="2">
    <location>
        <begin position="465"/>
        <end position="485"/>
    </location>
</feature>
<feature type="topological domain" description="Cytoplasmic" evidence="2">
    <location>
        <begin position="486"/>
        <end position="698"/>
    </location>
</feature>
<feature type="domain" description="SEFIR" evidence="3">
    <location>
        <begin position="496"/>
        <end position="645"/>
    </location>
</feature>
<feature type="glycosylation site" description="N-linked (GlcNAc...) asparagine" evidence="2">
    <location>
        <position position="182"/>
    </location>
</feature>
<feature type="glycosylation site" description="N-linked (GlcNAc...) asparagine" evidence="2">
    <location>
        <position position="209"/>
    </location>
</feature>
<feature type="glycosylation site" description="N-linked (GlcNAc...) asparagine" evidence="2">
    <location>
        <position position="249"/>
    </location>
</feature>
<feature type="glycosylation site" description="N-linked (GlcNAc...) asparagine" evidence="2">
    <location>
        <position position="255"/>
    </location>
</feature>
<feature type="glycosylation site" description="N-linked (GlcNAc...) asparagine" evidence="2">
    <location>
        <position position="259"/>
    </location>
</feature>
<feature type="disulfide bond" evidence="1">
    <location>
        <begin position="190"/>
        <end position="202"/>
    </location>
</feature>
<feature type="disulfide bond" evidence="1">
    <location>
        <begin position="266"/>
        <end position="316"/>
    </location>
</feature>
<feature type="disulfide bond" evidence="1">
    <location>
        <begin position="268"/>
        <end position="284"/>
    </location>
</feature>
<feature type="disulfide bond" evidence="1">
    <location>
        <begin position="325"/>
        <end position="334"/>
    </location>
</feature>
<feature type="disulfide bond" evidence="1">
    <location>
        <begin position="364"/>
        <end position="378"/>
    </location>
</feature>
<feature type="disulfide bond" evidence="1">
    <location>
        <begin position="406"/>
        <end position="413"/>
    </location>
</feature>
<feature type="disulfide bond" evidence="1">
    <location>
        <begin position="440"/>
        <end position="455"/>
    </location>
</feature>
<feature type="splice variant" id="VSP_058140" description="In isoform 3.">
    <location>
        <begin position="189"/>
        <end position="212"/>
    </location>
</feature>
<feature type="splice variant" id="VSP_058139" description="In isoform 2.">
    <location>
        <begin position="189"/>
        <end position="203"/>
    </location>
</feature>
<feature type="splice variant" id="VSP_058141" description="In isoform 4.">
    <location>
        <begin position="204"/>
        <end position="212"/>
    </location>
</feature>
<feature type="splice variant" id="VSP_058142" description="In isoform 5." evidence="11">
    <original>RKAARGSRTALLLHSADGAGYERLVGALASALSQMPLRVAVDLWSRRELSAHGALAWFHHQRRRILQEGGVVILLFSPAAVAQCQQWLQLQTVEPGPHDALAAWLSCVLPDFLQGRATGRYVGVYFDGLLHPDSVPSPFRVAPLFSLPSQLPAFLDALQGGCSTSAGRPADRVERVTQALRSALDSCTSSSEAPGCCEEWDLGPCTTLE</original>
    <variation>MTPSPPGSAACYPISCKAGRPAATSGSTSTGCCTQTLCPPRSASPRSSPCPRSCRLSWMHCREAAPLPRGDPRTGWNE</variation>
    <location>
        <begin position="490"/>
        <end position="698"/>
    </location>
</feature>
<feature type="sequence conflict" description="In Ref. 1; AAM77570 and 3; CAD23359/CAD23360." evidence="13" ref="1 3">
    <original>C</original>
    <variation>R</variation>
    <location>
        <position position="83"/>
    </location>
</feature>
<feature type="sequence conflict" description="In Ref. 1; AAM77570 and 3; CAD23359/CAD23360." evidence="13" ref="1 3">
    <original>L</original>
    <variation>S</variation>
    <location>
        <position position="379"/>
    </location>
</feature>
<feature type="sequence conflict" description="In Ref. 1; AAM77570 and 3; CAD23359/CAD23360." evidence="13" ref="1 3">
    <original>S</original>
    <variation>T</variation>
    <location>
        <position position="638"/>
    </location>
</feature>
<comment type="function">
    <text evidence="1 4 5 6 8 9 10">Receptor for IL17A and IL17F, major effector cytokines of innate and adaptive immune system involved in antimicrobial host defense and maintenance of tissue integrity (PubMed:19144317, PubMed:27923703). Receptor for IL17A and IL17F homodimers as part of a heterodimeric complex with IL17RA (PubMed:17911633, PubMed:20554964). Receptor for the heterodimer formed by IL17A and IL17B as part of a heterodimeric complex with IL17RA (By similarity). Has also been shown to be the cognate receptor for IL17F and to bind IL17A with high affinity without the need for IL17RA (By similarity). Upon binding of IL17F homodimer triggers downstream activation of TRAF6 and NF-kappa-B signaling pathway (PubMed:28813677). Induces transcriptional activation of IL33, a potent cytokine that stimulates group 2 innate lymphoid cells and adaptive T-helper 2 cells involved in pulmonary allergic response to fungi (PubMed:28813677). Promotes sympathetic innervation of peripheral organs by coordinating the communication between gamma-delta T cells and parenchymal cells. Stimulates sympathetic innervation of thermogenic adipose tissue by driving TGFB1 expression (PubMed:32076265). Binding of IL17A-IL17F to IL17RA-IL17RC heterodimeric receptor complex triggers homotypic interaction of IL17RA and IL17RC chains with TRAF3IP2 adapter through SEFIR domains. This leads to downstream TRAF6-mediated activation of NF-kappa-B and MAPkinase pathways ultimately resulting in transcriptional activation of cytokines, chemokines, antimicrobial peptides and matrix metalloproteinases, with potential strong immune inflammation (PubMed:20554964). Primarily induces neutrophil activation and recruitment at infection and inflammatory sites (PubMed:27923703). Stimulates the production of antimicrobial beta-defensins DEFB1, DEFB103A, and DEFB104A by mucosal epithelial cells, limiting the entry of microbes through the epithelial barriers (PubMed:19144317).</text>
</comment>
<comment type="subunit">
    <text evidence="1 6">Homodimer; disulfide-linked (By similarity). Heterodimer with IL17RA (PubMed:20554964). Heterodimerization with IL17RA is independent of the cytoplasmic tail. Associates with non-glycosylated IL17RA constitutively. Binding of IL17A and IL17F induces association with glycosylated IL17RA (PubMed:20554964). Forms complexes with 2:1 binding stoichiometry: two receptor chains for one interleukin molecule (By similarity). IL17A homodimer preferentially drives the formation of IL17RA-IL17RC heterodimeric receptor complex, whereas IL17F homodimer forms predominantly complexes with IL17RC homodimer (By similarity). IL17A-IL17F forms complexes with IL17RA-IL17RC, but with lower affinity when compared to IL17A homodimer (By similarity). IL17RC chain cannot distinguish between IL17A and IL17F molecules, potentially enabling the formation of topologically distinct complexes (By similarity). Interacts (through SEFIR domain and extended downstream region) with TRAF3IP2/ACT1 (phosphorylated) (PubMed:20554964).</text>
</comment>
<comment type="subcellular location">
    <molecule>Isoform 1</molecule>
    <subcellularLocation>
        <location evidence="4">Cell membrane</location>
        <topology evidence="2">Single-pass type I membrane protein</topology>
    </subcellularLocation>
</comment>
<comment type="subcellular location">
    <molecule>Isoform 2</molecule>
    <subcellularLocation>
        <location evidence="4">Cell membrane</location>
        <topology evidence="2">Single-pass type I membrane protein</topology>
    </subcellularLocation>
</comment>
<comment type="subcellular location">
    <molecule>Isoform 3</molecule>
    <subcellularLocation>
        <location evidence="4">Cell membrane</location>
        <topology evidence="2">Single-pass type I membrane protein</topology>
    </subcellularLocation>
</comment>
<comment type="subcellular location">
    <molecule>Isoform 4</molecule>
    <subcellularLocation>
        <location evidence="4">Cell membrane</location>
        <topology evidence="2">Single-pass type I membrane protein</topology>
    </subcellularLocation>
</comment>
<comment type="alternative products">
    <event type="alternative splicing"/>
    <isoform>
        <id>Q8K4C2-3</id>
        <name>1</name>
        <name evidence="12">IL17RC</name>
        <sequence type="displayed"/>
    </isoform>
    <isoform>
        <id>Q8K4C2-4</id>
        <name>2</name>
        <name evidence="12">IL17RC-delta7</name>
        <sequence type="described" ref="VSP_058139"/>
    </isoform>
    <isoform>
        <id>Q8K4C2-1</id>
        <name>3</name>
        <name evidence="12">IL17RC-delta7,8</name>
        <sequence type="described" ref="VSP_058140"/>
    </isoform>
    <isoform>
        <id>Q8K4C2-5</id>
        <name>4</name>
        <name evidence="12">IL17RC-delta8</name>
        <sequence type="described" ref="VSP_058141"/>
    </isoform>
    <isoform>
        <id>Q8K4C2-2</id>
        <name>5</name>
        <sequence type="described" ref="VSP_058142"/>
    </isoform>
</comment>
<comment type="tissue specificity">
    <text evidence="5 7 9">Highly expressed in colonic epithelial cells (PubMed:19144317). Expressed in lung epithelial cells (PubMed:28813677). Expressed in macrophages (PubMed:19144317). Highly expressed in B-1a B cells and at a lower extent in B-1b and B-2 B cells (at protein level) (PubMed:26735852).</text>
</comment>
<comment type="induction">
    <text evidence="9">Induced in lung epithelial cells upon bacterial and fungal infection. Up-regulated in lung epithelial cells by IL17F; this might account for a persistent activation via a positive feedback loop.</text>
</comment>
<sequence>MPVSWFLLSLALGRNPVVVSLERLMEPQDTARCSLGLSCHLWDGDVLCLPGSLQSAPGPVLVPTRLQTELVLRCPQKTDCALCVRVVVHLAVHGHWAEPEEAGKSDSELQESRNASLQAQVVLSFQAYPIARCALLEVQVPADLVQPGQSVGSAVFDCFEASLGAEVQIWSYTKPRYQKELNLTQQLPDCRGLEVRDSIQSCWVLPWLNVSTDGDNVLLTLDVSEEQDFSFLLYLRPVPDALKSLWYKNLTGPQNITLNHTDLVPCLCIQVWSLEPDSERVEFCPFREDPGAHRNLWHIARLRVLSPGVWQLDAPCCLPGKVTLCWQAPDQSPCQPLVPPVPQKNATVNEPQDFQLVAGHPNLCVQVSTWEKVQLQACLWADSLGPFKDDMLLVEMKTGLNNTSVCALEPSGCTPLPSMASTRAARLGEELLQDFRSHQCMQLWNDDNMGSLWACPMDKYIHRRWVLVWLACLLLAAALFFFLLLKKDRRKAARGSRTALLLHSADGAGYERLVGALASALSQMPLRVAVDLWSRRELSAHGALAWFHHQRRRILQEGGVVILLFSPAAVAQCQQWLQLQTVEPGPHDALAAWLSCVLPDFLQGRATGRYVGVYFDGLLHPDSVPSPFRVAPLFSLPSQLPAFLDALQGGCSTSAGRPADRVERVTQALRSALDSCTSSSEAPGCCEEWDLGPCTTLE</sequence>
<keyword id="KW-0025">Alternative splicing</keyword>
<keyword id="KW-1003">Cell membrane</keyword>
<keyword id="KW-1015">Disulfide bond</keyword>
<keyword id="KW-0325">Glycoprotein</keyword>
<keyword id="KW-0395">Inflammatory response</keyword>
<keyword id="KW-0472">Membrane</keyword>
<keyword id="KW-0675">Receptor</keyword>
<keyword id="KW-1185">Reference proteome</keyword>
<keyword id="KW-0732">Signal</keyword>
<keyword id="KW-0812">Transmembrane</keyword>
<keyword id="KW-1133">Transmembrane helix</keyword>
<gene>
    <name type="primary">Il17rc</name>
</gene>